<proteinExistence type="evidence at protein level"/>
<reference key="1">
    <citation type="journal article" date="1982" name="Eur. J. Immunol.">
        <title>The genetic basis of antibody production: the dominant anti-arsonate idiotype response of the strain A mouse.</title>
        <authorList>
            <person name="Siekevitz M."/>
            <person name="Gefter M.L."/>
            <person name="Brodeur P."/>
            <person name="Riblet R."/>
            <person name="Marshak-Rothstein A."/>
        </authorList>
    </citation>
    <scope>NUCLEOTIDE SEQUENCE</scope>
</reference>
<reference key="2">
    <citation type="journal article" date="2001" name="J. Immunol.">
        <title>Structural analysis of mutants of high-affinity and low-affinity p-azophenylarsonate-specific antibodies generated by alanine scanning of heavy chain complementarity-determining region 2.</title>
        <authorList>
            <person name="Parhami-Seren B."/>
            <person name="Viswanathan M."/>
            <person name="Strong R.K."/>
            <person name="Margolies M.N."/>
        </authorList>
    </citation>
    <scope>X-RAY CRYSTALLOGRAPHY (1.9 ANGSTROMS) OF 1-120</scope>
</reference>
<organism>
    <name type="scientific">Mus musculus</name>
    <name type="common">Mouse</name>
    <dbReference type="NCBI Taxonomy" id="10090"/>
    <lineage>
        <taxon>Eukaryota</taxon>
        <taxon>Metazoa</taxon>
        <taxon>Chordata</taxon>
        <taxon>Craniata</taxon>
        <taxon>Vertebrata</taxon>
        <taxon>Euteleostomi</taxon>
        <taxon>Mammalia</taxon>
        <taxon>Eutheria</taxon>
        <taxon>Euarchontoglires</taxon>
        <taxon>Glires</taxon>
        <taxon>Rodentia</taxon>
        <taxon>Myomorpha</taxon>
        <taxon>Muroidea</taxon>
        <taxon>Muridae</taxon>
        <taxon>Murinae</taxon>
        <taxon>Mus</taxon>
        <taxon>Mus</taxon>
    </lineage>
</organism>
<keyword id="KW-0002">3D-structure</keyword>
<keyword id="KW-1064">Adaptive immunity</keyword>
<keyword id="KW-0374">Hybridoma</keyword>
<keyword id="KW-0391">Immunity</keyword>
<keyword id="KW-1280">Immunoglobulin</keyword>
<keyword id="KW-1185">Reference proteome</keyword>
<protein>
    <recommendedName>
        <fullName>Ig heavy chain V region 36-65</fullName>
    </recommendedName>
</protein>
<evidence type="ECO:0007829" key="1">
    <source>
        <dbReference type="PDB" id="1JFQ"/>
    </source>
</evidence>
<accession>P01747</accession>
<dbReference type="PIR" id="A28572">
    <property type="entry name" value="A28572"/>
</dbReference>
<dbReference type="PIR" id="A94264">
    <property type="entry name" value="HVMSG7"/>
</dbReference>
<dbReference type="PIR" id="PH1487">
    <property type="entry name" value="PH1487"/>
</dbReference>
<dbReference type="PIR" id="PH1490">
    <property type="entry name" value="PH1490"/>
</dbReference>
<dbReference type="PIR" id="PH1491">
    <property type="entry name" value="PH1491"/>
</dbReference>
<dbReference type="PDB" id="1JFQ">
    <property type="method" value="X-ray"/>
    <property type="resolution" value="1.90 A"/>
    <property type="chains" value="H=1-120"/>
</dbReference>
<dbReference type="PDBsum" id="1JFQ"/>
<dbReference type="SMR" id="P01747"/>
<dbReference type="FunCoup" id="P01747">
    <property type="interactions" value="505"/>
</dbReference>
<dbReference type="MINT" id="P01747"/>
<dbReference type="PeptideAtlas" id="P01747"/>
<dbReference type="InParanoid" id="P01747"/>
<dbReference type="EvolutionaryTrace" id="P01747"/>
<dbReference type="Proteomes" id="UP000000589">
    <property type="component" value="Unplaced"/>
</dbReference>
<dbReference type="RNAct" id="P01747">
    <property type="molecule type" value="protein"/>
</dbReference>
<dbReference type="GO" id="GO:0005576">
    <property type="term" value="C:extracellular region"/>
    <property type="evidence" value="ECO:0007669"/>
    <property type="project" value="UniProtKB-ARBA"/>
</dbReference>
<dbReference type="GO" id="GO:0019814">
    <property type="term" value="C:immunoglobulin complex"/>
    <property type="evidence" value="ECO:0007669"/>
    <property type="project" value="UniProtKB-KW"/>
</dbReference>
<dbReference type="GO" id="GO:0003823">
    <property type="term" value="F:antigen binding"/>
    <property type="evidence" value="ECO:0000318"/>
    <property type="project" value="GO_Central"/>
</dbReference>
<dbReference type="GO" id="GO:0016064">
    <property type="term" value="P:immunoglobulin mediated immune response"/>
    <property type="evidence" value="ECO:0000318"/>
    <property type="project" value="GO_Central"/>
</dbReference>
<dbReference type="CDD" id="cd04981">
    <property type="entry name" value="IgV_H"/>
    <property type="match status" value="1"/>
</dbReference>
<dbReference type="FunFam" id="2.60.40.10:FF:001025">
    <property type="entry name" value="Immunoglobulin heavy variable V1-74"/>
    <property type="match status" value="1"/>
</dbReference>
<dbReference type="Gene3D" id="2.60.40.10">
    <property type="entry name" value="Immunoglobulins"/>
    <property type="match status" value="1"/>
</dbReference>
<dbReference type="InterPro" id="IPR007110">
    <property type="entry name" value="Ig-like_dom"/>
</dbReference>
<dbReference type="InterPro" id="IPR036179">
    <property type="entry name" value="Ig-like_dom_sf"/>
</dbReference>
<dbReference type="InterPro" id="IPR013783">
    <property type="entry name" value="Ig-like_fold"/>
</dbReference>
<dbReference type="InterPro" id="IPR003599">
    <property type="entry name" value="Ig_sub"/>
</dbReference>
<dbReference type="InterPro" id="IPR013106">
    <property type="entry name" value="Ig_V-set"/>
</dbReference>
<dbReference type="InterPro" id="IPR050199">
    <property type="entry name" value="IgHV"/>
</dbReference>
<dbReference type="PANTHER" id="PTHR23266">
    <property type="entry name" value="IMMUNOGLOBULIN HEAVY CHAIN"/>
    <property type="match status" value="1"/>
</dbReference>
<dbReference type="Pfam" id="PF07686">
    <property type="entry name" value="V-set"/>
    <property type="match status" value="1"/>
</dbReference>
<dbReference type="SMART" id="SM00409">
    <property type="entry name" value="IG"/>
    <property type="match status" value="1"/>
</dbReference>
<dbReference type="SMART" id="SM00406">
    <property type="entry name" value="IGv"/>
    <property type="match status" value="1"/>
</dbReference>
<dbReference type="SUPFAM" id="SSF48726">
    <property type="entry name" value="Immunoglobulin"/>
    <property type="match status" value="1"/>
</dbReference>
<dbReference type="PROSITE" id="PS50835">
    <property type="entry name" value="IG_LIKE"/>
    <property type="match status" value="1"/>
</dbReference>
<name>HVM03_MOUSE</name>
<feature type="chain" id="PRO_0000059869" description="Ig heavy chain V region 36-65">
    <location>
        <begin position="1"/>
        <end position="120" status="greater than"/>
    </location>
</feature>
<feature type="domain" description="Ig-like">
    <location>
        <begin position="1"/>
        <end position="111"/>
    </location>
</feature>
<feature type="non-terminal residue">
    <location>
        <position position="120"/>
    </location>
</feature>
<feature type="strand" evidence="1">
    <location>
        <begin position="2"/>
        <end position="7"/>
    </location>
</feature>
<feature type="strand" evidence="1">
    <location>
        <begin position="17"/>
        <end position="26"/>
    </location>
</feature>
<feature type="helix" evidence="1">
    <location>
        <begin position="28"/>
        <end position="30"/>
    </location>
</feature>
<feature type="strand" evidence="1">
    <location>
        <begin position="33"/>
        <end position="38"/>
    </location>
</feature>
<feature type="strand" evidence="1">
    <location>
        <begin position="40"/>
        <end position="42"/>
    </location>
</feature>
<feature type="strand" evidence="1">
    <location>
        <begin position="44"/>
        <end position="51"/>
    </location>
</feature>
<feature type="turn" evidence="1">
    <location>
        <begin position="52"/>
        <end position="55"/>
    </location>
</feature>
<feature type="strand" evidence="1">
    <location>
        <begin position="56"/>
        <end position="59"/>
    </location>
</feature>
<feature type="turn" evidence="1">
    <location>
        <begin position="61"/>
        <end position="63"/>
    </location>
</feature>
<feature type="strand" evidence="1">
    <location>
        <begin position="67"/>
        <end position="72"/>
    </location>
</feature>
<feature type="turn" evidence="1">
    <location>
        <begin position="73"/>
        <end position="76"/>
    </location>
</feature>
<feature type="strand" evidence="1">
    <location>
        <begin position="77"/>
        <end position="82"/>
    </location>
</feature>
<feature type="helix" evidence="1">
    <location>
        <begin position="87"/>
        <end position="89"/>
    </location>
</feature>
<feature type="strand" evidence="1">
    <location>
        <begin position="91"/>
        <end position="101"/>
    </location>
</feature>
<feature type="strand" evidence="1">
    <location>
        <begin position="104"/>
        <end position="110"/>
    </location>
</feature>
<feature type="strand" evidence="1">
    <location>
        <begin position="114"/>
        <end position="118"/>
    </location>
</feature>
<comment type="miscellaneous">
    <text>From analysis of the sizes of several other differentiated genes that hybridize to this one, the authors conclude that all of these V regions have rearranged to the same J segment, JH2.</text>
</comment>
<sequence>VQLQQSGAELVRAGSSVKMSCKASGYTFTSYGINWVKQRPGQGLEWIGYINPGNGYTKYNEKFKGKTTLTVDKSSSTAYMQLRSLTSEDSAVYFCARSVYYGGSYYFDYWGQGTTLTVSS</sequence>